<proteinExistence type="inferred from homology"/>
<keyword id="KW-0963">Cytoplasm</keyword>
<keyword id="KW-0690">Ribosome biogenesis</keyword>
<comment type="function">
    <text evidence="1">Required for maturation of 30S ribosomal subunits.</text>
</comment>
<comment type="subcellular location">
    <subcellularLocation>
        <location evidence="1">Cytoplasm</location>
    </subcellularLocation>
</comment>
<comment type="similarity">
    <text evidence="1">Belongs to the RimP family.</text>
</comment>
<gene>
    <name evidence="1" type="primary">rimP</name>
    <name type="ordered locus">MS1446</name>
</gene>
<organism>
    <name type="scientific">Mannheimia succiniciproducens (strain KCTC 0769BP / MBEL55E)</name>
    <dbReference type="NCBI Taxonomy" id="221988"/>
    <lineage>
        <taxon>Bacteria</taxon>
        <taxon>Pseudomonadati</taxon>
        <taxon>Pseudomonadota</taxon>
        <taxon>Gammaproteobacteria</taxon>
        <taxon>Pasteurellales</taxon>
        <taxon>Pasteurellaceae</taxon>
        <taxon>Basfia</taxon>
    </lineage>
</organism>
<evidence type="ECO:0000255" key="1">
    <source>
        <dbReference type="HAMAP-Rule" id="MF_01077"/>
    </source>
</evidence>
<sequence>MATLEQNLQQMLQGSVEDLGCELWGIECQRAGRFMTVRLYIDKEGGVTVDDCADVSRQVSAILDVEDPIADKYNLEVSSPGLDRPLFTLEQFQRYVGQEISVHLRIPMLDRRKWQGKLERIEGDMLTLIVDDQEQSFALSNIQKANVIPKF</sequence>
<protein>
    <recommendedName>
        <fullName evidence="1">Ribosome maturation factor RimP</fullName>
    </recommendedName>
</protein>
<reference key="1">
    <citation type="journal article" date="2004" name="Nat. Biotechnol.">
        <title>The genome sequence of the capnophilic rumen bacterium Mannheimia succiniciproducens.</title>
        <authorList>
            <person name="Hong S.H."/>
            <person name="Kim J.S."/>
            <person name="Lee S.Y."/>
            <person name="In Y.H."/>
            <person name="Choi S.S."/>
            <person name="Rih J.-K."/>
            <person name="Kim C.H."/>
            <person name="Jeong H."/>
            <person name="Hur C.G."/>
            <person name="Kim J.J."/>
        </authorList>
    </citation>
    <scope>NUCLEOTIDE SEQUENCE [LARGE SCALE GENOMIC DNA]</scope>
    <source>
        <strain>KCTC 0769BP / MBEL55E</strain>
    </source>
</reference>
<name>RIMP_MANSM</name>
<dbReference type="EMBL" id="AE016827">
    <property type="protein sequence ID" value="AAU38053.1"/>
    <property type="molecule type" value="Genomic_DNA"/>
</dbReference>
<dbReference type="RefSeq" id="WP_011200620.1">
    <property type="nucleotide sequence ID" value="NC_006300.1"/>
</dbReference>
<dbReference type="SMR" id="Q65SK7"/>
<dbReference type="STRING" id="221988.MS1446"/>
<dbReference type="KEGG" id="msu:MS1446"/>
<dbReference type="eggNOG" id="COG0779">
    <property type="taxonomic scope" value="Bacteria"/>
</dbReference>
<dbReference type="HOGENOM" id="CLU_070525_1_1_6"/>
<dbReference type="OrthoDB" id="9805006at2"/>
<dbReference type="Proteomes" id="UP000000607">
    <property type="component" value="Chromosome"/>
</dbReference>
<dbReference type="GO" id="GO:0005829">
    <property type="term" value="C:cytosol"/>
    <property type="evidence" value="ECO:0007669"/>
    <property type="project" value="TreeGrafter"/>
</dbReference>
<dbReference type="GO" id="GO:0000028">
    <property type="term" value="P:ribosomal small subunit assembly"/>
    <property type="evidence" value="ECO:0007669"/>
    <property type="project" value="TreeGrafter"/>
</dbReference>
<dbReference type="GO" id="GO:0006412">
    <property type="term" value="P:translation"/>
    <property type="evidence" value="ECO:0007669"/>
    <property type="project" value="TreeGrafter"/>
</dbReference>
<dbReference type="CDD" id="cd01734">
    <property type="entry name" value="YlxS_C"/>
    <property type="match status" value="1"/>
</dbReference>
<dbReference type="FunFam" id="3.30.300.70:FF:000001">
    <property type="entry name" value="Ribosome maturation factor RimP"/>
    <property type="match status" value="1"/>
</dbReference>
<dbReference type="Gene3D" id="2.30.30.180">
    <property type="entry name" value="Ribosome maturation factor RimP, C-terminal domain"/>
    <property type="match status" value="1"/>
</dbReference>
<dbReference type="Gene3D" id="3.30.300.70">
    <property type="entry name" value="RimP-like superfamily, N-terminal"/>
    <property type="match status" value="1"/>
</dbReference>
<dbReference type="HAMAP" id="MF_01077">
    <property type="entry name" value="RimP"/>
    <property type="match status" value="1"/>
</dbReference>
<dbReference type="InterPro" id="IPR003728">
    <property type="entry name" value="Ribosome_maturation_RimP"/>
</dbReference>
<dbReference type="InterPro" id="IPR028998">
    <property type="entry name" value="RimP_C"/>
</dbReference>
<dbReference type="InterPro" id="IPR036847">
    <property type="entry name" value="RimP_C_sf"/>
</dbReference>
<dbReference type="InterPro" id="IPR028989">
    <property type="entry name" value="RimP_N"/>
</dbReference>
<dbReference type="InterPro" id="IPR035956">
    <property type="entry name" value="RimP_N_sf"/>
</dbReference>
<dbReference type="NCBIfam" id="NF000927">
    <property type="entry name" value="PRK00092.1-1"/>
    <property type="match status" value="1"/>
</dbReference>
<dbReference type="PANTHER" id="PTHR33867">
    <property type="entry name" value="RIBOSOME MATURATION FACTOR RIMP"/>
    <property type="match status" value="1"/>
</dbReference>
<dbReference type="PANTHER" id="PTHR33867:SF1">
    <property type="entry name" value="RIBOSOME MATURATION FACTOR RIMP"/>
    <property type="match status" value="1"/>
</dbReference>
<dbReference type="Pfam" id="PF17384">
    <property type="entry name" value="DUF150_C"/>
    <property type="match status" value="1"/>
</dbReference>
<dbReference type="Pfam" id="PF02576">
    <property type="entry name" value="RimP_N"/>
    <property type="match status" value="1"/>
</dbReference>
<dbReference type="SUPFAM" id="SSF74942">
    <property type="entry name" value="YhbC-like, C-terminal domain"/>
    <property type="match status" value="1"/>
</dbReference>
<dbReference type="SUPFAM" id="SSF75420">
    <property type="entry name" value="YhbC-like, N-terminal domain"/>
    <property type="match status" value="1"/>
</dbReference>
<accession>Q65SK7</accession>
<feature type="chain" id="PRO_0000229249" description="Ribosome maturation factor RimP">
    <location>
        <begin position="1"/>
        <end position="151"/>
    </location>
</feature>